<keyword id="KW-1185">Reference proteome</keyword>
<keyword id="KW-0687">Ribonucleoprotein</keyword>
<keyword id="KW-0689">Ribosomal protein</keyword>
<keyword id="KW-0694">RNA-binding</keyword>
<keyword id="KW-0699">rRNA-binding</keyword>
<evidence type="ECO:0000255" key="1">
    <source>
        <dbReference type="HAMAP-Rule" id="MF_00537"/>
    </source>
</evidence>
<evidence type="ECO:0000305" key="2"/>
<accession>Q3B6E9</accession>
<reference key="1">
    <citation type="submission" date="2005-08" db="EMBL/GenBank/DDBJ databases">
        <title>Complete sequence of Pelodictyon luteolum DSM 273.</title>
        <authorList>
            <consortium name="US DOE Joint Genome Institute"/>
            <person name="Copeland A."/>
            <person name="Lucas S."/>
            <person name="Lapidus A."/>
            <person name="Barry K."/>
            <person name="Detter J.C."/>
            <person name="Glavina T."/>
            <person name="Hammon N."/>
            <person name="Israni S."/>
            <person name="Pitluck S."/>
            <person name="Bryant D."/>
            <person name="Schmutz J."/>
            <person name="Larimer F."/>
            <person name="Land M."/>
            <person name="Kyrpides N."/>
            <person name="Ivanova N."/>
            <person name="Richardson P."/>
        </authorList>
    </citation>
    <scope>NUCLEOTIDE SEQUENCE [LARGE SCALE GENOMIC DNA]</scope>
    <source>
        <strain>DSM 273 / BCRC 81028 / 2530</strain>
    </source>
</reference>
<name>RS14_CHLL3</name>
<comment type="function">
    <text evidence="1">Binds 16S rRNA, required for the assembly of 30S particles and may also be responsible for determining the conformation of the 16S rRNA at the A site.</text>
</comment>
<comment type="subunit">
    <text evidence="1">Part of the 30S ribosomal subunit. Contacts proteins S3 and S10.</text>
</comment>
<comment type="similarity">
    <text evidence="1">Belongs to the universal ribosomal protein uS14 family.</text>
</comment>
<protein>
    <recommendedName>
        <fullName evidence="1">Small ribosomal subunit protein uS14</fullName>
    </recommendedName>
    <alternativeName>
        <fullName evidence="2">30S ribosomal protein S14</fullName>
    </alternativeName>
</protein>
<organism>
    <name type="scientific">Chlorobium luteolum (strain DSM 273 / BCRC 81028 / 2530)</name>
    <name type="common">Pelodictyon luteolum</name>
    <dbReference type="NCBI Taxonomy" id="319225"/>
    <lineage>
        <taxon>Bacteria</taxon>
        <taxon>Pseudomonadati</taxon>
        <taxon>Chlorobiota</taxon>
        <taxon>Chlorobiia</taxon>
        <taxon>Chlorobiales</taxon>
        <taxon>Chlorobiaceae</taxon>
        <taxon>Chlorobium/Pelodictyon group</taxon>
        <taxon>Pelodictyon</taxon>
    </lineage>
</organism>
<dbReference type="EMBL" id="CP000096">
    <property type="protein sequence ID" value="ABB23082.1"/>
    <property type="molecule type" value="Genomic_DNA"/>
</dbReference>
<dbReference type="RefSeq" id="WP_011356958.1">
    <property type="nucleotide sequence ID" value="NC_007512.1"/>
</dbReference>
<dbReference type="SMR" id="Q3B6E9"/>
<dbReference type="STRING" id="319225.Plut_0194"/>
<dbReference type="KEGG" id="plt:Plut_0194"/>
<dbReference type="eggNOG" id="COG0199">
    <property type="taxonomic scope" value="Bacteria"/>
</dbReference>
<dbReference type="HOGENOM" id="CLU_139869_0_0_10"/>
<dbReference type="OrthoDB" id="9810484at2"/>
<dbReference type="Proteomes" id="UP000002709">
    <property type="component" value="Chromosome"/>
</dbReference>
<dbReference type="GO" id="GO:0005737">
    <property type="term" value="C:cytoplasm"/>
    <property type="evidence" value="ECO:0007669"/>
    <property type="project" value="UniProtKB-ARBA"/>
</dbReference>
<dbReference type="GO" id="GO:0015935">
    <property type="term" value="C:small ribosomal subunit"/>
    <property type="evidence" value="ECO:0007669"/>
    <property type="project" value="TreeGrafter"/>
</dbReference>
<dbReference type="GO" id="GO:0019843">
    <property type="term" value="F:rRNA binding"/>
    <property type="evidence" value="ECO:0007669"/>
    <property type="project" value="UniProtKB-UniRule"/>
</dbReference>
<dbReference type="GO" id="GO:0003735">
    <property type="term" value="F:structural constituent of ribosome"/>
    <property type="evidence" value="ECO:0007669"/>
    <property type="project" value="InterPro"/>
</dbReference>
<dbReference type="GO" id="GO:0006412">
    <property type="term" value="P:translation"/>
    <property type="evidence" value="ECO:0007669"/>
    <property type="project" value="UniProtKB-UniRule"/>
</dbReference>
<dbReference type="Gene3D" id="4.10.830.10">
    <property type="entry name" value="30s Ribosomal Protein S14, Chain N"/>
    <property type="match status" value="1"/>
</dbReference>
<dbReference type="HAMAP" id="MF_00537">
    <property type="entry name" value="Ribosomal_uS14_1"/>
    <property type="match status" value="1"/>
</dbReference>
<dbReference type="InterPro" id="IPR001209">
    <property type="entry name" value="Ribosomal_uS14"/>
</dbReference>
<dbReference type="InterPro" id="IPR023036">
    <property type="entry name" value="Ribosomal_uS14_bac/plastid"/>
</dbReference>
<dbReference type="InterPro" id="IPR018271">
    <property type="entry name" value="Ribosomal_uS14_CS"/>
</dbReference>
<dbReference type="InterPro" id="IPR043140">
    <property type="entry name" value="Ribosomal_uS14_sf"/>
</dbReference>
<dbReference type="NCBIfam" id="NF006477">
    <property type="entry name" value="PRK08881.1"/>
    <property type="match status" value="1"/>
</dbReference>
<dbReference type="PANTHER" id="PTHR19836">
    <property type="entry name" value="30S RIBOSOMAL PROTEIN S14"/>
    <property type="match status" value="1"/>
</dbReference>
<dbReference type="PANTHER" id="PTHR19836:SF19">
    <property type="entry name" value="SMALL RIBOSOMAL SUBUNIT PROTEIN US14M"/>
    <property type="match status" value="1"/>
</dbReference>
<dbReference type="Pfam" id="PF00253">
    <property type="entry name" value="Ribosomal_S14"/>
    <property type="match status" value="1"/>
</dbReference>
<dbReference type="SUPFAM" id="SSF57716">
    <property type="entry name" value="Glucocorticoid receptor-like (DNA-binding domain)"/>
    <property type="match status" value="1"/>
</dbReference>
<dbReference type="PROSITE" id="PS00527">
    <property type="entry name" value="RIBOSOMAL_S14"/>
    <property type="match status" value="1"/>
</dbReference>
<proteinExistence type="inferred from homology"/>
<feature type="chain" id="PRO_1000128482" description="Small ribosomal subunit protein uS14">
    <location>
        <begin position="1"/>
        <end position="89"/>
    </location>
</feature>
<gene>
    <name evidence="1" type="primary">rpsN</name>
    <name type="ordered locus">Plut_0194</name>
</gene>
<sequence length="89" mass="10276">MAKKSVIARNEKRKRLVEQYAAKREELLKAGDYEALRKLPRDSSATRVRNRCVLTGRGRGVYEKFGLCRHMFRKLALEGKIPGVKKASW</sequence>